<name>Y542_GLOVI</name>
<reference key="1">
    <citation type="journal article" date="2003" name="DNA Res.">
        <title>Complete genome structure of Gloeobacter violaceus PCC 7421, a cyanobacterium that lacks thylakoids.</title>
        <authorList>
            <person name="Nakamura Y."/>
            <person name="Kaneko T."/>
            <person name="Sato S."/>
            <person name="Mimuro M."/>
            <person name="Miyashita H."/>
            <person name="Tsuchiya T."/>
            <person name="Sasamoto S."/>
            <person name="Watanabe A."/>
            <person name="Kawashima K."/>
            <person name="Kishida Y."/>
            <person name="Kiyokawa C."/>
            <person name="Kohara M."/>
            <person name="Matsumoto M."/>
            <person name="Matsuno A."/>
            <person name="Nakazaki N."/>
            <person name="Shimpo S."/>
            <person name="Takeuchi C."/>
            <person name="Yamada M."/>
            <person name="Tabata S."/>
        </authorList>
    </citation>
    <scope>NUCLEOTIDE SEQUENCE [LARGE SCALE GENOMIC DNA]</scope>
    <source>
        <strain>ATCC 29082 / PCC 7421</strain>
    </source>
</reference>
<dbReference type="EMBL" id="BA000045">
    <property type="protein sequence ID" value="BAC88483.1"/>
    <property type="molecule type" value="Genomic_DNA"/>
</dbReference>
<dbReference type="RefSeq" id="NP_923488.1">
    <property type="nucleotide sequence ID" value="NC_005125.1"/>
</dbReference>
<dbReference type="RefSeq" id="WP_011140545.1">
    <property type="nucleotide sequence ID" value="NC_005125.1"/>
</dbReference>
<dbReference type="SMR" id="Q7NN71"/>
<dbReference type="STRING" id="251221.gene:10758015"/>
<dbReference type="EnsemblBacteria" id="BAC88483">
    <property type="protein sequence ID" value="BAC88483"/>
    <property type="gene ID" value="BAC88483"/>
</dbReference>
<dbReference type="KEGG" id="gvi:gll0542"/>
<dbReference type="PATRIC" id="fig|251221.4.peg.551"/>
<dbReference type="eggNOG" id="COG1641">
    <property type="taxonomic scope" value="Bacteria"/>
</dbReference>
<dbReference type="HOGENOM" id="CLU_028523_2_1_3"/>
<dbReference type="InParanoid" id="Q7NN71"/>
<dbReference type="OrthoDB" id="9765625at2"/>
<dbReference type="PhylomeDB" id="Q7NN71"/>
<dbReference type="Proteomes" id="UP000000557">
    <property type="component" value="Chromosome"/>
</dbReference>
<dbReference type="GO" id="GO:0016829">
    <property type="term" value="F:lyase activity"/>
    <property type="evidence" value="ECO:0007669"/>
    <property type="project" value="UniProtKB-UniRule"/>
</dbReference>
<dbReference type="GO" id="GO:0016151">
    <property type="term" value="F:nickel cation binding"/>
    <property type="evidence" value="ECO:0007669"/>
    <property type="project" value="UniProtKB-UniRule"/>
</dbReference>
<dbReference type="Gene3D" id="3.10.20.300">
    <property type="entry name" value="mk0293 like domain"/>
    <property type="match status" value="1"/>
</dbReference>
<dbReference type="Gene3D" id="3.30.70.1380">
    <property type="entry name" value="Transcriptional regulatory protein pf0864 domain like"/>
    <property type="match status" value="1"/>
</dbReference>
<dbReference type="HAMAP" id="MF_01074">
    <property type="entry name" value="LarC"/>
    <property type="match status" value="1"/>
</dbReference>
<dbReference type="InterPro" id="IPR002822">
    <property type="entry name" value="Ni_insertion"/>
</dbReference>
<dbReference type="NCBIfam" id="TIGR00299">
    <property type="entry name" value="nickel pincer cofactor biosynthesis protein LarC"/>
    <property type="match status" value="1"/>
</dbReference>
<dbReference type="PANTHER" id="PTHR36566">
    <property type="entry name" value="NICKEL INSERTION PROTEIN-RELATED"/>
    <property type="match status" value="1"/>
</dbReference>
<dbReference type="PANTHER" id="PTHR36566:SF1">
    <property type="entry name" value="PYRIDINIUM-3,5-BISTHIOCARBOXYLIC ACID MONONUCLEOTIDE NICKEL INSERTION PROTEIN"/>
    <property type="match status" value="1"/>
</dbReference>
<dbReference type="Pfam" id="PF01969">
    <property type="entry name" value="Ni_insertion"/>
    <property type="match status" value="1"/>
</dbReference>
<keyword id="KW-0533">Nickel</keyword>
<keyword id="KW-1185">Reference proteome</keyword>
<feature type="chain" id="PRO_0000146848" description="Putative nickel insertion protein">
    <location>
        <begin position="1"/>
        <end position="421"/>
    </location>
</feature>
<gene>
    <name type="ordered locus">gll0542</name>
</gene>
<evidence type="ECO:0000255" key="1">
    <source>
        <dbReference type="HAMAP-Rule" id="MF_01074"/>
    </source>
</evidence>
<proteinExistence type="inferred from homology"/>
<organism>
    <name type="scientific">Gloeobacter violaceus (strain ATCC 29082 / PCC 7421)</name>
    <dbReference type="NCBI Taxonomy" id="251221"/>
    <lineage>
        <taxon>Bacteria</taxon>
        <taxon>Bacillati</taxon>
        <taxon>Cyanobacteriota</taxon>
        <taxon>Cyanophyceae</taxon>
        <taxon>Gloeobacterales</taxon>
        <taxon>Gloeobacteraceae</taxon>
        <taxon>Gloeobacter</taxon>
    </lineage>
</organism>
<protein>
    <recommendedName>
        <fullName evidence="1">Putative nickel insertion protein</fullName>
    </recommendedName>
</protein>
<accession>Q7NN71</accession>
<comment type="similarity">
    <text evidence="1">Belongs to the LarC family.</text>
</comment>
<sequence length="421" mass="46052">MKLAYFDCPAGISGDMCLGALVDAGVPADYLIAQLAKLPMHDEYRLHFERVVKNGVAATKARVPLGERAGHTHRHLPEIRALLETASLPPRAAEWSVRVFVALAHAEALVHNTTPERVHFHEVGATDALVDVVGTCLGLDYLNIEALHCSALPVGGGLVHAAHGVMPVPTPAVVRLWESRRVPVYSNRIHRELVTPTGAAIACALAASFGEMPSMAVLRVGLGAGDMDLPIPNILRLWLGEATEPLLAARARTVTDVHAHAHHDHSHEEVVACLETQTDDLNPQISGYLFERLLAAGAADVFTVPVGMKKSRPGTLMTVLCAPHLLSTCEEILLRETTTLGVRRHFQVRSVLERHHEPVETIFGTVRIKVGSRDQQVLNAQPEFEDCRRLSEQTGQPLKLVQQVALATWHQRRPTQSERQN</sequence>